<proteinExistence type="inferred from homology"/>
<feature type="chain" id="PRO_1000132998" description="Enolase">
    <location>
        <begin position="1"/>
        <end position="426"/>
    </location>
</feature>
<feature type="active site" description="Proton donor" evidence="1">
    <location>
        <position position="207"/>
    </location>
</feature>
<feature type="active site" description="Proton acceptor" evidence="1">
    <location>
        <position position="337"/>
    </location>
</feature>
<feature type="binding site" evidence="1">
    <location>
        <position position="165"/>
    </location>
    <ligand>
        <name>(2R)-2-phosphoglycerate</name>
        <dbReference type="ChEBI" id="CHEBI:58289"/>
    </ligand>
</feature>
<feature type="binding site" evidence="1">
    <location>
        <position position="244"/>
    </location>
    <ligand>
        <name>Mg(2+)</name>
        <dbReference type="ChEBI" id="CHEBI:18420"/>
    </ligand>
</feature>
<feature type="binding site" evidence="1">
    <location>
        <position position="285"/>
    </location>
    <ligand>
        <name>Mg(2+)</name>
        <dbReference type="ChEBI" id="CHEBI:18420"/>
    </ligand>
</feature>
<feature type="binding site" evidence="1">
    <location>
        <position position="312"/>
    </location>
    <ligand>
        <name>Mg(2+)</name>
        <dbReference type="ChEBI" id="CHEBI:18420"/>
    </ligand>
</feature>
<feature type="binding site" evidence="1">
    <location>
        <position position="337"/>
    </location>
    <ligand>
        <name>(2R)-2-phosphoglycerate</name>
        <dbReference type="ChEBI" id="CHEBI:58289"/>
    </ligand>
</feature>
<feature type="binding site" evidence="1">
    <location>
        <position position="366"/>
    </location>
    <ligand>
        <name>(2R)-2-phosphoglycerate</name>
        <dbReference type="ChEBI" id="CHEBI:58289"/>
    </ligand>
</feature>
<feature type="binding site" evidence="1">
    <location>
        <position position="367"/>
    </location>
    <ligand>
        <name>(2R)-2-phosphoglycerate</name>
        <dbReference type="ChEBI" id="CHEBI:58289"/>
    </ligand>
</feature>
<feature type="binding site" evidence="1">
    <location>
        <position position="388"/>
    </location>
    <ligand>
        <name>(2R)-2-phosphoglycerate</name>
        <dbReference type="ChEBI" id="CHEBI:58289"/>
    </ligand>
</feature>
<evidence type="ECO:0000255" key="1">
    <source>
        <dbReference type="HAMAP-Rule" id="MF_00318"/>
    </source>
</evidence>
<organism>
    <name type="scientific">Cyanothece sp. (strain PCC 7425 / ATCC 29141)</name>
    <dbReference type="NCBI Taxonomy" id="395961"/>
    <lineage>
        <taxon>Bacteria</taxon>
        <taxon>Bacillati</taxon>
        <taxon>Cyanobacteriota</taxon>
        <taxon>Cyanophyceae</taxon>
        <taxon>Gomontiellales</taxon>
        <taxon>Cyanothecaceae</taxon>
        <taxon>Cyanothece</taxon>
    </lineage>
</organism>
<dbReference type="EC" id="4.2.1.11" evidence="1"/>
<dbReference type="EMBL" id="CP001344">
    <property type="protein sequence ID" value="ACL45810.1"/>
    <property type="molecule type" value="Genomic_DNA"/>
</dbReference>
<dbReference type="SMR" id="B8HQY9"/>
<dbReference type="STRING" id="395961.Cyan7425_3486"/>
<dbReference type="KEGG" id="cyn:Cyan7425_3486"/>
<dbReference type="eggNOG" id="COG0148">
    <property type="taxonomic scope" value="Bacteria"/>
</dbReference>
<dbReference type="HOGENOM" id="CLU_031223_2_1_3"/>
<dbReference type="OrthoDB" id="9804716at2"/>
<dbReference type="UniPathway" id="UPA00109">
    <property type="reaction ID" value="UER00187"/>
</dbReference>
<dbReference type="GO" id="GO:0009986">
    <property type="term" value="C:cell surface"/>
    <property type="evidence" value="ECO:0007669"/>
    <property type="project" value="UniProtKB-SubCell"/>
</dbReference>
<dbReference type="GO" id="GO:0005576">
    <property type="term" value="C:extracellular region"/>
    <property type="evidence" value="ECO:0007669"/>
    <property type="project" value="UniProtKB-SubCell"/>
</dbReference>
<dbReference type="GO" id="GO:0000015">
    <property type="term" value="C:phosphopyruvate hydratase complex"/>
    <property type="evidence" value="ECO:0007669"/>
    <property type="project" value="InterPro"/>
</dbReference>
<dbReference type="GO" id="GO:0000287">
    <property type="term" value="F:magnesium ion binding"/>
    <property type="evidence" value="ECO:0007669"/>
    <property type="project" value="UniProtKB-UniRule"/>
</dbReference>
<dbReference type="GO" id="GO:0004634">
    <property type="term" value="F:phosphopyruvate hydratase activity"/>
    <property type="evidence" value="ECO:0007669"/>
    <property type="project" value="UniProtKB-UniRule"/>
</dbReference>
<dbReference type="GO" id="GO:0006096">
    <property type="term" value="P:glycolytic process"/>
    <property type="evidence" value="ECO:0007669"/>
    <property type="project" value="UniProtKB-UniRule"/>
</dbReference>
<dbReference type="CDD" id="cd03313">
    <property type="entry name" value="enolase"/>
    <property type="match status" value="1"/>
</dbReference>
<dbReference type="FunFam" id="3.20.20.120:FF:000001">
    <property type="entry name" value="Enolase"/>
    <property type="match status" value="1"/>
</dbReference>
<dbReference type="FunFam" id="3.30.390.10:FF:000001">
    <property type="entry name" value="Enolase"/>
    <property type="match status" value="1"/>
</dbReference>
<dbReference type="Gene3D" id="3.20.20.120">
    <property type="entry name" value="Enolase-like C-terminal domain"/>
    <property type="match status" value="1"/>
</dbReference>
<dbReference type="Gene3D" id="3.30.390.10">
    <property type="entry name" value="Enolase-like, N-terminal domain"/>
    <property type="match status" value="1"/>
</dbReference>
<dbReference type="HAMAP" id="MF_00318">
    <property type="entry name" value="Enolase"/>
    <property type="match status" value="1"/>
</dbReference>
<dbReference type="InterPro" id="IPR000941">
    <property type="entry name" value="Enolase"/>
</dbReference>
<dbReference type="InterPro" id="IPR036849">
    <property type="entry name" value="Enolase-like_C_sf"/>
</dbReference>
<dbReference type="InterPro" id="IPR029017">
    <property type="entry name" value="Enolase-like_N"/>
</dbReference>
<dbReference type="InterPro" id="IPR020810">
    <property type="entry name" value="Enolase_C"/>
</dbReference>
<dbReference type="InterPro" id="IPR020809">
    <property type="entry name" value="Enolase_CS"/>
</dbReference>
<dbReference type="InterPro" id="IPR020811">
    <property type="entry name" value="Enolase_N"/>
</dbReference>
<dbReference type="NCBIfam" id="TIGR01060">
    <property type="entry name" value="eno"/>
    <property type="match status" value="1"/>
</dbReference>
<dbReference type="PANTHER" id="PTHR11902">
    <property type="entry name" value="ENOLASE"/>
    <property type="match status" value="1"/>
</dbReference>
<dbReference type="PANTHER" id="PTHR11902:SF1">
    <property type="entry name" value="ENOLASE"/>
    <property type="match status" value="1"/>
</dbReference>
<dbReference type="Pfam" id="PF00113">
    <property type="entry name" value="Enolase_C"/>
    <property type="match status" value="1"/>
</dbReference>
<dbReference type="Pfam" id="PF03952">
    <property type="entry name" value="Enolase_N"/>
    <property type="match status" value="1"/>
</dbReference>
<dbReference type="PIRSF" id="PIRSF001400">
    <property type="entry name" value="Enolase"/>
    <property type="match status" value="1"/>
</dbReference>
<dbReference type="PRINTS" id="PR00148">
    <property type="entry name" value="ENOLASE"/>
</dbReference>
<dbReference type="SFLD" id="SFLDS00001">
    <property type="entry name" value="Enolase"/>
    <property type="match status" value="1"/>
</dbReference>
<dbReference type="SFLD" id="SFLDF00002">
    <property type="entry name" value="enolase"/>
    <property type="match status" value="1"/>
</dbReference>
<dbReference type="SMART" id="SM01192">
    <property type="entry name" value="Enolase_C"/>
    <property type="match status" value="1"/>
</dbReference>
<dbReference type="SMART" id="SM01193">
    <property type="entry name" value="Enolase_N"/>
    <property type="match status" value="1"/>
</dbReference>
<dbReference type="SUPFAM" id="SSF51604">
    <property type="entry name" value="Enolase C-terminal domain-like"/>
    <property type="match status" value="1"/>
</dbReference>
<dbReference type="SUPFAM" id="SSF54826">
    <property type="entry name" value="Enolase N-terminal domain-like"/>
    <property type="match status" value="1"/>
</dbReference>
<dbReference type="PROSITE" id="PS00164">
    <property type="entry name" value="ENOLASE"/>
    <property type="match status" value="1"/>
</dbReference>
<name>ENO_CYAP4</name>
<accession>B8HQY9</accession>
<gene>
    <name evidence="1" type="primary">eno</name>
    <name type="ordered locus">Cyan7425_3486</name>
</gene>
<keyword id="KW-0963">Cytoplasm</keyword>
<keyword id="KW-0324">Glycolysis</keyword>
<keyword id="KW-0456">Lyase</keyword>
<keyword id="KW-0460">Magnesium</keyword>
<keyword id="KW-0479">Metal-binding</keyword>
<keyword id="KW-0964">Secreted</keyword>
<protein>
    <recommendedName>
        <fullName evidence="1">Enolase</fullName>
        <ecNumber evidence="1">4.2.1.11</ecNumber>
    </recommendedName>
    <alternativeName>
        <fullName evidence="1">2-phospho-D-glycerate hydro-lyase</fullName>
    </alternativeName>
    <alternativeName>
        <fullName evidence="1">2-phosphoglycerate dehydratase</fullName>
    </alternativeName>
</protein>
<sequence length="426" mass="45481">MFETAIAAITAREILDSRGRPTVEAEVELECGAIGLAQVPSGASTGSFEAHELRDGDAQRYGGKGVLKAVQNIQEQIKPHLLGSDALKQELIDRKMIGLDGSANKASLGANAILAVSLATAKAGAEALGLPLYRYLGGPLANLLPVPLMNVINGGAHADNNVDFQEFMIVPHGASSFREALRWGAEVFAALSKVLHDKGLLTGVGDEGGFAPNLPSNQAALDLLMTAIAKAGFKPGEEISLALDVAASEFYQDGQYSYDGAAHSPSELIDYLATLSEQYPIVSIEDGLQEDDWQHWQQLTSKIGHRVQLVGDDLFVTNPIRLDKGIKERAGNAILIKLNQIGSLTETLQTIDLATRNRYRSIISHRSGETEDTTIADLAVATRAGQIKTGSLCRSERVAKYNRLLRIEDELGAQAIYAGTIGMGPG</sequence>
<reference key="1">
    <citation type="journal article" date="2011" name="MBio">
        <title>Novel metabolic attributes of the genus Cyanothece, comprising a group of unicellular nitrogen-fixing Cyanobacteria.</title>
        <authorList>
            <person name="Bandyopadhyay A."/>
            <person name="Elvitigala T."/>
            <person name="Welsh E."/>
            <person name="Stockel J."/>
            <person name="Liberton M."/>
            <person name="Min H."/>
            <person name="Sherman L.A."/>
            <person name="Pakrasi H.B."/>
        </authorList>
    </citation>
    <scope>NUCLEOTIDE SEQUENCE [LARGE SCALE GENOMIC DNA]</scope>
    <source>
        <strain>PCC 7425 / ATCC 29141</strain>
    </source>
</reference>
<comment type="function">
    <text evidence="1">Catalyzes the reversible conversion of 2-phosphoglycerate (2-PG) into phosphoenolpyruvate (PEP). It is essential for the degradation of carbohydrates via glycolysis.</text>
</comment>
<comment type="catalytic activity">
    <reaction evidence="1">
        <text>(2R)-2-phosphoglycerate = phosphoenolpyruvate + H2O</text>
        <dbReference type="Rhea" id="RHEA:10164"/>
        <dbReference type="ChEBI" id="CHEBI:15377"/>
        <dbReference type="ChEBI" id="CHEBI:58289"/>
        <dbReference type="ChEBI" id="CHEBI:58702"/>
        <dbReference type="EC" id="4.2.1.11"/>
    </reaction>
</comment>
<comment type="cofactor">
    <cofactor evidence="1">
        <name>Mg(2+)</name>
        <dbReference type="ChEBI" id="CHEBI:18420"/>
    </cofactor>
    <text evidence="1">Binds a second Mg(2+) ion via substrate during catalysis.</text>
</comment>
<comment type="pathway">
    <text evidence="1">Carbohydrate degradation; glycolysis; pyruvate from D-glyceraldehyde 3-phosphate: step 4/5.</text>
</comment>
<comment type="subcellular location">
    <subcellularLocation>
        <location evidence="1">Cytoplasm</location>
    </subcellularLocation>
    <subcellularLocation>
        <location evidence="1">Secreted</location>
    </subcellularLocation>
    <subcellularLocation>
        <location evidence="1">Cell surface</location>
    </subcellularLocation>
    <text evidence="1">Fractions of enolase are present in both the cytoplasm and on the cell surface.</text>
</comment>
<comment type="similarity">
    <text evidence="1">Belongs to the enolase family.</text>
</comment>